<accession>B1NNT7</accession>
<accession>D0N8A3</accession>
<reference key="1">
    <citation type="journal article" date="2008" name="Mol. Plant Microbe Interact.">
        <title>The Phytophthora infestans avirulence gene Avr4 encodes an RXLR-dEER effector.</title>
        <authorList>
            <person name="van Poppel P.M."/>
            <person name="Guo J."/>
            <person name="van de Vondervoort P.J."/>
            <person name="Jung M.W."/>
            <person name="Birch P.R."/>
            <person name="Whisson S.C."/>
            <person name="Govers F."/>
        </authorList>
    </citation>
    <scope>NUCLEOTIDE SEQUENCE [GENOMIC DNA]</scope>
    <scope>FUNCTION</scope>
    <scope>DOMAIN</scope>
    <source>
        <strain>T30-4</strain>
    </source>
</reference>
<reference key="2">
    <citation type="journal article" date="2012" name="PPO Spec. Rep.">
        <title>Are simple Phytophthora infestans races really that simple?</title>
        <authorList>
            <person name="Pankin A.A."/>
            <person name="Kinash E.A."/>
            <person name="Kozlovskaya I.N."/>
            <person name="Kuznetsova M.A."/>
            <person name="Khavkin E.E."/>
        </authorList>
    </citation>
    <scope>NUCLEOTIDE SEQUENCE [GENOMIC DNA]</scope>
    <source>
        <strain>Race 11</strain>
    </source>
</reference>
<reference key="3">
    <citation type="journal article" date="2009" name="Nature">
        <title>Genome sequence and analysis of the Irish potato famine pathogen Phytophthora infestans.</title>
        <authorList>
            <consortium name="The Broad Institute Genome Sequencing Platform"/>
            <person name="Haas B.J."/>
            <person name="Kamoun S."/>
            <person name="Zody M.C."/>
            <person name="Jiang R.H."/>
            <person name="Handsaker R.E."/>
            <person name="Cano L.M."/>
            <person name="Grabherr M."/>
            <person name="Kodira C.D."/>
            <person name="Raffaele S."/>
            <person name="Torto-Alalibo T."/>
            <person name="Bozkurt T.O."/>
            <person name="Ah-Fong A.M."/>
            <person name="Alvarado L."/>
            <person name="Anderson V.L."/>
            <person name="Armstrong M.R."/>
            <person name="Avrova A."/>
            <person name="Baxter L."/>
            <person name="Beynon J."/>
            <person name="Boevink P.C."/>
            <person name="Bollmann S.R."/>
            <person name="Bos J.I."/>
            <person name="Bulone V."/>
            <person name="Cai G."/>
            <person name="Cakir C."/>
            <person name="Carrington J.C."/>
            <person name="Chawner M."/>
            <person name="Conti L."/>
            <person name="Costanzo S."/>
            <person name="Ewan R."/>
            <person name="Fahlgren N."/>
            <person name="Fischbach M.A."/>
            <person name="Fugelstad J."/>
            <person name="Gilroy E.M."/>
            <person name="Gnerre S."/>
            <person name="Green P.J."/>
            <person name="Grenville-Briggs L.J."/>
            <person name="Griffith J."/>
            <person name="Grunwald N.J."/>
            <person name="Horn K."/>
            <person name="Horner N.R."/>
            <person name="Hu C.H."/>
            <person name="Huitema E."/>
            <person name="Jeong D.H."/>
            <person name="Jones A.M."/>
            <person name="Jones J.D."/>
            <person name="Jones R.W."/>
            <person name="Karlsson E.K."/>
            <person name="Kunjeti S.G."/>
            <person name="Lamour K."/>
            <person name="Liu Z."/>
            <person name="Ma L."/>
            <person name="Maclean D."/>
            <person name="Chibucos M.C."/>
            <person name="McDonald H."/>
            <person name="McWalters J."/>
            <person name="Meijer H.J."/>
            <person name="Morgan W."/>
            <person name="Morris P.F."/>
            <person name="Munro C.A."/>
            <person name="O'Neill K."/>
            <person name="Ospina-Giraldo M."/>
            <person name="Pinzon A."/>
            <person name="Pritchard L."/>
            <person name="Ramsahoye B."/>
            <person name="Ren Q."/>
            <person name="Restrepo S."/>
            <person name="Roy S."/>
            <person name="Sadanandom A."/>
            <person name="Savidor A."/>
            <person name="Schornack S."/>
            <person name="Schwartz D.C."/>
            <person name="Schumann U.D."/>
            <person name="Schwessinger B."/>
            <person name="Seyer L."/>
            <person name="Sharpe T."/>
            <person name="Silvar C."/>
            <person name="Song J."/>
            <person name="Studholme D.J."/>
            <person name="Sykes S."/>
            <person name="Thines M."/>
            <person name="van de Vondervoort P.J."/>
            <person name="Phuntumart V."/>
            <person name="Wawra S."/>
            <person name="Weide R."/>
            <person name="Win J."/>
            <person name="Young C."/>
            <person name="Zhou S."/>
            <person name="Fry W."/>
            <person name="Meyers B.C."/>
            <person name="van West P."/>
            <person name="Ristaino J."/>
            <person name="Govers F."/>
            <person name="Birch P.R."/>
            <person name="Whisson S.C."/>
            <person name="Judelson H.S."/>
            <person name="Nusbaum C."/>
        </authorList>
    </citation>
    <scope>NUCLEOTIDE SEQUENCE [LARGE SCALE GENOMIC DNA]</scope>
    <scope>INDUCTION</scope>
    <source>
        <strain>T30-4</strain>
    </source>
</reference>
<reference key="4">
    <citation type="journal article" date="2009" name="Mol. Plant Pathol.">
        <title>Recognition of Phytophthora infestans Avr4 by potato R4 is triggered by C-terminal domains comprising W motifs.</title>
        <authorList>
            <person name="Van Poppel P.M."/>
            <person name="Jiang R.H."/>
            <person name="Sliwka J."/>
            <person name="Govers F."/>
        </authorList>
    </citation>
    <scope>FUNCTION</scope>
    <scope>SUBCELLULAR LOCATION</scope>
    <scope>DOMAIN</scope>
</reference>
<reference key="5">
    <citation type="journal article" date="2017" name="Front. Plant Sci.">
        <title>Conserved RXLR effector genes of Phytophthora infestans expressed at the early stage of potato infection are suppressive to host defense.</title>
        <authorList>
            <person name="Yin J."/>
            <person name="Gu B."/>
            <person name="Huang G."/>
            <person name="Tian Y."/>
            <person name="Quan J."/>
            <person name="Lindqvist-Kreuze H."/>
            <person name="Shan W."/>
        </authorList>
    </citation>
    <scope>INDUCTION</scope>
</reference>
<reference key="6">
    <citation type="journal article" date="2019" name="J. Exp. Bot.">
        <title>Phytophthora infestans RXLR effectors act in concert at diverse subcellular locations to enhance host colonization.</title>
        <authorList>
            <person name="Wang S."/>
            <person name="McLellan H."/>
            <person name="Bukharova T."/>
            <person name="He Q."/>
            <person name="Murphy F."/>
            <person name="Shi J."/>
            <person name="Sun S."/>
            <person name="van Weymers P."/>
            <person name="Ren Y."/>
            <person name="Thilliez G."/>
            <person name="Wang H."/>
            <person name="Chen X."/>
            <person name="Engelhardt S."/>
            <person name="Vleeshouwers V."/>
            <person name="Gilroy E.M."/>
            <person name="Whisson S.C."/>
            <person name="Hein I."/>
            <person name="Wang X."/>
            <person name="Tian Z."/>
            <person name="Birch P.R.J."/>
            <person name="Boevink P.C."/>
        </authorList>
    </citation>
    <scope>SUBCELLULAR LOCATION</scope>
</reference>
<feature type="signal peptide" evidence="1">
    <location>
        <begin position="1"/>
        <end position="24"/>
    </location>
</feature>
<feature type="chain" id="PRO_5002769343" description="RxLR effector protein Avr4">
    <location>
        <begin position="25"/>
        <end position="287"/>
    </location>
</feature>
<feature type="region of interest" description="W1 motif" evidence="3">
    <location>
        <begin position="115"/>
        <end position="138"/>
    </location>
</feature>
<feature type="region of interest" description="W2 motif" evidence="3">
    <location>
        <begin position="148"/>
        <end position="171"/>
    </location>
</feature>
<feature type="region of interest" description="W3 motif" evidence="3">
    <location>
        <begin position="221"/>
        <end position="244"/>
    </location>
</feature>
<feature type="region of interest" description="Y motif" evidence="3">
    <location>
        <begin position="246"/>
        <end position="267"/>
    </location>
</feature>
<feature type="short sequence motif" description="RxLR-dEER" evidence="10">
    <location>
        <begin position="42"/>
        <end position="55"/>
    </location>
</feature>
<sequence length="287" mass="33048">MRSLHILLVFTASLLASLTESAKADSLARTVSVVDNVKVKSRFLRAQTDEKNEERATITLGDRVVSDKAATKDLLQQLLALGTPLEKVQKQFLNIPQMKTFAELSKHPNWKALDKYERMQWQKLKEGETLTFMRLGDRLYSKEKAQEQLLRWVAQKKPVESVYDDLQVAGFAHNTVAARQNWRAYIMYDKWFTAASQMQRNPQQYAKFGTGYHSEQKTTELFEKWAMEGTHIKSVITTLKLNGKSASEMANNENFPALLKYVKLYLDFKPVRDLNAKSRLQARRPIS</sequence>
<evidence type="ECO:0000255" key="1"/>
<evidence type="ECO:0000269" key="2">
    <source>
    </source>
</evidence>
<evidence type="ECO:0000269" key="3">
    <source>
    </source>
</evidence>
<evidence type="ECO:0000269" key="4">
    <source>
    </source>
</evidence>
<evidence type="ECO:0000269" key="5">
    <source>
    </source>
</evidence>
<evidence type="ECO:0000269" key="6">
    <source>
    </source>
</evidence>
<evidence type="ECO:0000303" key="7">
    <source>
    </source>
</evidence>
<evidence type="ECO:0000303" key="8">
    <source>
    </source>
</evidence>
<evidence type="ECO:0000305" key="9"/>
<evidence type="ECO:0000305" key="10">
    <source>
    </source>
</evidence>
<name>AVR4_PHYIT</name>
<protein>
    <recommendedName>
        <fullName evidence="8">RxLR effector protein Avr4</fullName>
    </recommendedName>
    <alternativeName>
        <fullName evidence="8">Avirulence protein 4</fullName>
    </alternativeName>
</protein>
<dbReference type="EMBL" id="EF672355">
    <property type="protein sequence ID" value="ABV66276.1"/>
    <property type="molecule type" value="Genomic_DNA"/>
</dbReference>
<dbReference type="EMBL" id="KF188223">
    <property type="protein sequence ID" value="AGV54943.1"/>
    <property type="molecule type" value="Genomic_DNA"/>
</dbReference>
<dbReference type="EMBL" id="DS028128">
    <property type="protein sequence ID" value="EEY53788.1"/>
    <property type="molecule type" value="Genomic_DNA"/>
</dbReference>
<dbReference type="RefSeq" id="XP_002904419.1">
    <property type="nucleotide sequence ID" value="XM_002904373.1"/>
</dbReference>
<dbReference type="SMR" id="B1NNT7"/>
<dbReference type="STRING" id="403677.B1NNT7"/>
<dbReference type="EnsemblProtists" id="PITG_07387T0">
    <property type="protein sequence ID" value="PITG_07387T0"/>
    <property type="gene ID" value="PITG_07387"/>
</dbReference>
<dbReference type="GeneID" id="9480388"/>
<dbReference type="KEGG" id="pif:PITG_07387"/>
<dbReference type="VEuPathDB" id="FungiDB:PITG_07387"/>
<dbReference type="eggNOG" id="ENOG502RGEU">
    <property type="taxonomic scope" value="Eukaryota"/>
</dbReference>
<dbReference type="HOGENOM" id="CLU_974769_0_0_1"/>
<dbReference type="InParanoid" id="B1NNT7"/>
<dbReference type="OMA" id="WAAANPH"/>
<dbReference type="OrthoDB" id="124027at2759"/>
<dbReference type="PHI-base" id="PHI:10636"/>
<dbReference type="PHI-base" id="PHI:5098"/>
<dbReference type="Proteomes" id="UP000006643">
    <property type="component" value="Partially assembled WGS sequence"/>
</dbReference>
<dbReference type="GO" id="GO:0005576">
    <property type="term" value="C:extracellular region"/>
    <property type="evidence" value="ECO:0007669"/>
    <property type="project" value="UniProtKB-SubCell"/>
</dbReference>
<dbReference type="GO" id="GO:0030430">
    <property type="term" value="C:host cell cytoplasm"/>
    <property type="evidence" value="ECO:0007669"/>
    <property type="project" value="UniProtKB-SubCell"/>
</dbReference>
<dbReference type="GO" id="GO:0044196">
    <property type="term" value="C:host cell nucleolus"/>
    <property type="evidence" value="ECO:0007669"/>
    <property type="project" value="UniProtKB-SubCell"/>
</dbReference>
<dbReference type="GO" id="GO:0044163">
    <property type="term" value="C:host cytoskeleton"/>
    <property type="evidence" value="ECO:0007669"/>
    <property type="project" value="UniProtKB-SubCell"/>
</dbReference>
<keyword id="KW-1035">Host cytoplasm</keyword>
<keyword id="KW-1037">Host cytoskeleton</keyword>
<keyword id="KW-1048">Host nucleus</keyword>
<keyword id="KW-1185">Reference proteome</keyword>
<keyword id="KW-0677">Repeat</keyword>
<keyword id="KW-0964">Secreted</keyword>
<keyword id="KW-0732">Signal</keyword>
<keyword id="KW-0843">Virulence</keyword>
<gene>
    <name evidence="7" type="primary">Avr4</name>
    <name type="ORF">PITG_07387</name>
</gene>
<organism>
    <name type="scientific">Phytophthora infestans (strain T30-4)</name>
    <name type="common">Potato late blight agent</name>
    <dbReference type="NCBI Taxonomy" id="403677"/>
    <lineage>
        <taxon>Eukaryota</taxon>
        <taxon>Sar</taxon>
        <taxon>Stramenopiles</taxon>
        <taxon>Oomycota</taxon>
        <taxon>Peronosporales</taxon>
        <taxon>Peronosporaceae</taxon>
        <taxon>Phytophthora</taxon>
    </lineage>
</organism>
<proteinExistence type="evidence at transcript level"/>
<comment type="function">
    <text evidence="2 3">Secreted effector that acts as an elicitor of hypersensitive response (HR) specifically on plants carrying defense protein R4, through its interaction with this protein (PubMed:18842095, PubMed:19694952).</text>
</comment>
<comment type="subcellular location">
    <subcellularLocation>
        <location evidence="6">Secreted</location>
    </subcellularLocation>
    <subcellularLocation>
        <location evidence="6">Host cytoplasm</location>
    </subcellularLocation>
    <subcellularLocation>
        <location evidence="6">Host nucleus</location>
    </subcellularLocation>
    <subcellularLocation>
        <location evidence="6">Host nucleus</location>
        <location evidence="6">Host nucleolus</location>
    </subcellularLocation>
    <subcellularLocation>
        <location evidence="6">Host cytoplasm</location>
        <location evidence="6">Host cytoskeleton</location>
    </subcellularLocation>
</comment>
<comment type="induction">
    <text evidence="4 5">Expression is induced during host plant infection.</text>
</comment>
<comment type="domain">
    <text evidence="2 3">Oomycete Avh family proteins have a modular structure with an N-terminal signal peptide (SP), an RXLR-dEER domain and a C-terminus with a variable number of modules that consist of W, Y and L motifs after highly conserved residues (PubMed:19694952). The C-ter of Avr4 contains 3 W motifs, 1 Y motif but no L motif. The RXLR-dEER motif functions as a host targeting signal (HTS) (PubMed:18842095). The region containing the W2 motif, in combination with either the W1 or W3 motif, triggers a necrotic response in potato plants carrying the resistance gene R4.</text>
</comment>
<comment type="similarity">
    <text evidence="9">Belongs to the RxLR effector family.</text>
</comment>